<sequence>MELVLKDAQSALEVSETTFGRDFNEALVHQVVVAYAANARQGTRAQKTRAEVTGSGKKPWRQKGTGRARAGGVKGPIWRGGGVTFAAKTQDHSQKVNKKMYRGALKSILSELVRQDRLVVVESFSVEAPKTKELKAKLKAMNLEDVLIVTSEVDENLFLAARNLYKVDVRDVAGLDPVSLIAFNTVLVTADAVKQIEEMLA</sequence>
<gene>
    <name evidence="1" type="primary">rplD</name>
    <name type="ordered locus">Shewana3_0200</name>
</gene>
<dbReference type="EMBL" id="CP000469">
    <property type="protein sequence ID" value="ABK46444.1"/>
    <property type="molecule type" value="Genomic_DNA"/>
</dbReference>
<dbReference type="RefSeq" id="WP_011070618.1">
    <property type="nucleotide sequence ID" value="NC_008577.1"/>
</dbReference>
<dbReference type="SMR" id="A0KRM5"/>
<dbReference type="STRING" id="94122.Shewana3_0200"/>
<dbReference type="GeneID" id="94726187"/>
<dbReference type="KEGG" id="shn:Shewana3_0200"/>
<dbReference type="eggNOG" id="COG0088">
    <property type="taxonomic scope" value="Bacteria"/>
</dbReference>
<dbReference type="HOGENOM" id="CLU_041575_5_2_6"/>
<dbReference type="OrthoDB" id="9803201at2"/>
<dbReference type="Proteomes" id="UP000002589">
    <property type="component" value="Chromosome"/>
</dbReference>
<dbReference type="GO" id="GO:1990904">
    <property type="term" value="C:ribonucleoprotein complex"/>
    <property type="evidence" value="ECO:0007669"/>
    <property type="project" value="UniProtKB-KW"/>
</dbReference>
<dbReference type="GO" id="GO:0005840">
    <property type="term" value="C:ribosome"/>
    <property type="evidence" value="ECO:0007669"/>
    <property type="project" value="UniProtKB-KW"/>
</dbReference>
<dbReference type="GO" id="GO:0019843">
    <property type="term" value="F:rRNA binding"/>
    <property type="evidence" value="ECO:0007669"/>
    <property type="project" value="UniProtKB-UniRule"/>
</dbReference>
<dbReference type="GO" id="GO:0003735">
    <property type="term" value="F:structural constituent of ribosome"/>
    <property type="evidence" value="ECO:0007669"/>
    <property type="project" value="InterPro"/>
</dbReference>
<dbReference type="GO" id="GO:0006412">
    <property type="term" value="P:translation"/>
    <property type="evidence" value="ECO:0007669"/>
    <property type="project" value="UniProtKB-UniRule"/>
</dbReference>
<dbReference type="FunFam" id="3.40.1370.10:FF:000001">
    <property type="entry name" value="50S ribosomal protein L4"/>
    <property type="match status" value="1"/>
</dbReference>
<dbReference type="Gene3D" id="3.40.1370.10">
    <property type="match status" value="1"/>
</dbReference>
<dbReference type="HAMAP" id="MF_01328_B">
    <property type="entry name" value="Ribosomal_uL4_B"/>
    <property type="match status" value="1"/>
</dbReference>
<dbReference type="InterPro" id="IPR002136">
    <property type="entry name" value="Ribosomal_uL4"/>
</dbReference>
<dbReference type="InterPro" id="IPR013005">
    <property type="entry name" value="Ribosomal_uL4-like"/>
</dbReference>
<dbReference type="InterPro" id="IPR023574">
    <property type="entry name" value="Ribosomal_uL4_dom_sf"/>
</dbReference>
<dbReference type="NCBIfam" id="TIGR03953">
    <property type="entry name" value="rplD_bact"/>
    <property type="match status" value="1"/>
</dbReference>
<dbReference type="PANTHER" id="PTHR10746">
    <property type="entry name" value="50S RIBOSOMAL PROTEIN L4"/>
    <property type="match status" value="1"/>
</dbReference>
<dbReference type="PANTHER" id="PTHR10746:SF6">
    <property type="entry name" value="LARGE RIBOSOMAL SUBUNIT PROTEIN UL4M"/>
    <property type="match status" value="1"/>
</dbReference>
<dbReference type="Pfam" id="PF00573">
    <property type="entry name" value="Ribosomal_L4"/>
    <property type="match status" value="1"/>
</dbReference>
<dbReference type="SUPFAM" id="SSF52166">
    <property type="entry name" value="Ribosomal protein L4"/>
    <property type="match status" value="1"/>
</dbReference>
<comment type="function">
    <text evidence="1">One of the primary rRNA binding proteins, this protein initially binds near the 5'-end of the 23S rRNA. It is important during the early stages of 50S assembly. It makes multiple contacts with different domains of the 23S rRNA in the assembled 50S subunit and ribosome.</text>
</comment>
<comment type="function">
    <text evidence="1">Forms part of the polypeptide exit tunnel.</text>
</comment>
<comment type="subunit">
    <text evidence="1">Part of the 50S ribosomal subunit.</text>
</comment>
<comment type="similarity">
    <text evidence="1">Belongs to the universal ribosomal protein uL4 family.</text>
</comment>
<protein>
    <recommendedName>
        <fullName evidence="1">Large ribosomal subunit protein uL4</fullName>
    </recommendedName>
    <alternativeName>
        <fullName evidence="3">50S ribosomal protein L4</fullName>
    </alternativeName>
</protein>
<reference key="1">
    <citation type="submission" date="2006-09" db="EMBL/GenBank/DDBJ databases">
        <title>Complete sequence of chromosome 1 of Shewanella sp. ANA-3.</title>
        <authorList>
            <person name="Copeland A."/>
            <person name="Lucas S."/>
            <person name="Lapidus A."/>
            <person name="Barry K."/>
            <person name="Detter J.C."/>
            <person name="Glavina del Rio T."/>
            <person name="Hammon N."/>
            <person name="Israni S."/>
            <person name="Dalin E."/>
            <person name="Tice H."/>
            <person name="Pitluck S."/>
            <person name="Chertkov O."/>
            <person name="Brettin T."/>
            <person name="Bruce D."/>
            <person name="Han C."/>
            <person name="Tapia R."/>
            <person name="Gilna P."/>
            <person name="Schmutz J."/>
            <person name="Larimer F."/>
            <person name="Land M."/>
            <person name="Hauser L."/>
            <person name="Kyrpides N."/>
            <person name="Kim E."/>
            <person name="Newman D."/>
            <person name="Salticov C."/>
            <person name="Konstantinidis K."/>
            <person name="Klappenback J."/>
            <person name="Tiedje J."/>
            <person name="Richardson P."/>
        </authorList>
    </citation>
    <scope>NUCLEOTIDE SEQUENCE [LARGE SCALE GENOMIC DNA]</scope>
    <source>
        <strain>ANA-3</strain>
    </source>
</reference>
<organism>
    <name type="scientific">Shewanella sp. (strain ANA-3)</name>
    <dbReference type="NCBI Taxonomy" id="94122"/>
    <lineage>
        <taxon>Bacteria</taxon>
        <taxon>Pseudomonadati</taxon>
        <taxon>Pseudomonadota</taxon>
        <taxon>Gammaproteobacteria</taxon>
        <taxon>Alteromonadales</taxon>
        <taxon>Shewanellaceae</taxon>
        <taxon>Shewanella</taxon>
    </lineage>
</organism>
<proteinExistence type="inferred from homology"/>
<name>RL4_SHESA</name>
<evidence type="ECO:0000255" key="1">
    <source>
        <dbReference type="HAMAP-Rule" id="MF_01328"/>
    </source>
</evidence>
<evidence type="ECO:0000256" key="2">
    <source>
        <dbReference type="SAM" id="MobiDB-lite"/>
    </source>
</evidence>
<evidence type="ECO:0000305" key="3"/>
<keyword id="KW-0687">Ribonucleoprotein</keyword>
<keyword id="KW-0689">Ribosomal protein</keyword>
<keyword id="KW-0694">RNA-binding</keyword>
<keyword id="KW-0699">rRNA-binding</keyword>
<feature type="chain" id="PRO_1000052497" description="Large ribosomal subunit protein uL4">
    <location>
        <begin position="1"/>
        <end position="201"/>
    </location>
</feature>
<feature type="region of interest" description="Disordered" evidence="2">
    <location>
        <begin position="45"/>
        <end position="71"/>
    </location>
</feature>
<accession>A0KRM5</accession>